<protein>
    <recommendedName>
        <fullName>Lysine--tRNA ligase</fullName>
        <ecNumber>6.1.1.6</ecNumber>
    </recommendedName>
    <alternativeName>
        <fullName>Lysyl-tRNA synthetase</fullName>
        <shortName>LysRS</shortName>
    </alternativeName>
</protein>
<evidence type="ECO:0000250" key="1"/>
<evidence type="ECO:0000305" key="2"/>
<proteinExistence type="inferred from homology"/>
<reference key="1">
    <citation type="journal article" date="1996" name="DNA Res.">
        <title>Sequence analysis of the genome of the unicellular cyanobacterium Synechocystis sp. strain PCC6803. II. Sequence determination of the entire genome and assignment of potential protein-coding regions.</title>
        <authorList>
            <person name="Kaneko T."/>
            <person name="Sato S."/>
            <person name="Kotani H."/>
            <person name="Tanaka A."/>
            <person name="Asamizu E."/>
            <person name="Nakamura Y."/>
            <person name="Miyajima N."/>
            <person name="Hirosawa M."/>
            <person name="Sugiura M."/>
            <person name="Sasamoto S."/>
            <person name="Kimura T."/>
            <person name="Hosouchi T."/>
            <person name="Matsuno A."/>
            <person name="Muraki A."/>
            <person name="Nakazaki N."/>
            <person name="Naruo K."/>
            <person name="Okumura S."/>
            <person name="Shimpo S."/>
            <person name="Takeuchi C."/>
            <person name="Wada T."/>
            <person name="Watanabe A."/>
            <person name="Yamada M."/>
            <person name="Yasuda M."/>
            <person name="Tabata S."/>
        </authorList>
    </citation>
    <scope>NUCLEOTIDE SEQUENCE [LARGE SCALE GENOMIC DNA]</scope>
    <source>
        <strain>ATCC 27184 / PCC 6803 / Kazusa</strain>
    </source>
</reference>
<sequence>MADSHSHSSLEEIRATRLEKAEQLRQLGLNPYAYTWEITHQAQDLQETYRDLSNGEEVDLKVAIAGRILARRVMGKLAFFTLQDESGTIQLYLEKQRLTEHMPELENAFNLLKKITDVGDILGVTGTLKRTEKGELSVYVQTYAVLTKSLLPLPDKWHGLTDTEKRYRQRYVDLIVNPTVRQTFRRRAQITAAIRRYLDKQGFIEIETPVLQGESGGAEARPFITHHNTLGMPLYLRIATELHLKRLVVGGFEKVFELGRIFRNEGVSTRHNPEFTSIEVYQAYVDYNEMMALTEALVTTAAQAVLGTLKITYQGEEIDLTPPWKRITMHEAVQLETGIDFSQFTDLETAKQAATKAGIGVPEDCPSLGHLLNHAFEQKVEGTLMQPTFIIDFPVEISPLAKPHRSKPGLVERFELFVYGRELANSFSELTDPIDQRSRLEAQAAKKAAGDLEAHSVDEDFLTALEYGMPPTGGLGIGIDRLVMLLTDSPSIRDVIAFPLLKNQEAGSDG</sequence>
<gene>
    <name type="primary">lysS</name>
    <name type="ordered locus">slr1550</name>
</gene>
<name>SYK_SYNY3</name>
<organism>
    <name type="scientific">Synechocystis sp. (strain ATCC 27184 / PCC 6803 / Kazusa)</name>
    <dbReference type="NCBI Taxonomy" id="1111708"/>
    <lineage>
        <taxon>Bacteria</taxon>
        <taxon>Bacillati</taxon>
        <taxon>Cyanobacteriota</taxon>
        <taxon>Cyanophyceae</taxon>
        <taxon>Synechococcales</taxon>
        <taxon>Merismopediaceae</taxon>
        <taxon>Synechocystis</taxon>
    </lineage>
</organism>
<accession>P73443</accession>
<dbReference type="EC" id="6.1.1.6"/>
<dbReference type="EMBL" id="BA000022">
    <property type="protein sequence ID" value="BAA17483.1"/>
    <property type="molecule type" value="Genomic_DNA"/>
</dbReference>
<dbReference type="PIR" id="S77380">
    <property type="entry name" value="S77380"/>
</dbReference>
<dbReference type="SMR" id="P73443"/>
<dbReference type="FunCoup" id="P73443">
    <property type="interactions" value="512"/>
</dbReference>
<dbReference type="IntAct" id="P73443">
    <property type="interactions" value="5"/>
</dbReference>
<dbReference type="STRING" id="1148.gene:10498348"/>
<dbReference type="PaxDb" id="1148-1652562"/>
<dbReference type="EnsemblBacteria" id="BAA17483">
    <property type="protein sequence ID" value="BAA17483"/>
    <property type="gene ID" value="BAA17483"/>
</dbReference>
<dbReference type="KEGG" id="syn:slr1550"/>
<dbReference type="eggNOG" id="COG1190">
    <property type="taxonomic scope" value="Bacteria"/>
</dbReference>
<dbReference type="InParanoid" id="P73443"/>
<dbReference type="PhylomeDB" id="P73443"/>
<dbReference type="Proteomes" id="UP000001425">
    <property type="component" value="Chromosome"/>
</dbReference>
<dbReference type="GO" id="GO:0005737">
    <property type="term" value="C:cytoplasm"/>
    <property type="evidence" value="ECO:0000318"/>
    <property type="project" value="GO_Central"/>
</dbReference>
<dbReference type="GO" id="GO:0005524">
    <property type="term" value="F:ATP binding"/>
    <property type="evidence" value="ECO:0007669"/>
    <property type="project" value="UniProtKB-UniRule"/>
</dbReference>
<dbReference type="GO" id="GO:0004824">
    <property type="term" value="F:lysine-tRNA ligase activity"/>
    <property type="evidence" value="ECO:0000318"/>
    <property type="project" value="GO_Central"/>
</dbReference>
<dbReference type="GO" id="GO:0000287">
    <property type="term" value="F:magnesium ion binding"/>
    <property type="evidence" value="ECO:0007669"/>
    <property type="project" value="UniProtKB-UniRule"/>
</dbReference>
<dbReference type="GO" id="GO:0000049">
    <property type="term" value="F:tRNA binding"/>
    <property type="evidence" value="ECO:0000318"/>
    <property type="project" value="GO_Central"/>
</dbReference>
<dbReference type="GO" id="GO:0006430">
    <property type="term" value="P:lysyl-tRNA aminoacylation"/>
    <property type="evidence" value="ECO:0000318"/>
    <property type="project" value="GO_Central"/>
</dbReference>
<dbReference type="CDD" id="cd00775">
    <property type="entry name" value="LysRS_core"/>
    <property type="match status" value="1"/>
</dbReference>
<dbReference type="CDD" id="cd04322">
    <property type="entry name" value="LysRS_N"/>
    <property type="match status" value="1"/>
</dbReference>
<dbReference type="FunFam" id="2.40.50.140:FF:000024">
    <property type="entry name" value="Lysine--tRNA ligase"/>
    <property type="match status" value="1"/>
</dbReference>
<dbReference type="FunFam" id="3.30.930.10:FF:000067">
    <property type="entry name" value="Lysine--tRNA ligase"/>
    <property type="match status" value="1"/>
</dbReference>
<dbReference type="Gene3D" id="3.30.930.10">
    <property type="entry name" value="Bira Bifunctional Protein, Domain 2"/>
    <property type="match status" value="1"/>
</dbReference>
<dbReference type="Gene3D" id="2.40.50.140">
    <property type="entry name" value="Nucleic acid-binding proteins"/>
    <property type="match status" value="1"/>
</dbReference>
<dbReference type="HAMAP" id="MF_00252">
    <property type="entry name" value="Lys_tRNA_synth_class2"/>
    <property type="match status" value="1"/>
</dbReference>
<dbReference type="InterPro" id="IPR004364">
    <property type="entry name" value="Aa-tRNA-synt_II"/>
</dbReference>
<dbReference type="InterPro" id="IPR006195">
    <property type="entry name" value="aa-tRNA-synth_II"/>
</dbReference>
<dbReference type="InterPro" id="IPR045864">
    <property type="entry name" value="aa-tRNA-synth_II/BPL/LPL"/>
</dbReference>
<dbReference type="InterPro" id="IPR002313">
    <property type="entry name" value="Lys-tRNA-ligase_II"/>
</dbReference>
<dbReference type="InterPro" id="IPR034762">
    <property type="entry name" value="Lys-tRNA-ligase_II_bac/euk"/>
</dbReference>
<dbReference type="InterPro" id="IPR044136">
    <property type="entry name" value="Lys-tRNA-ligase_II_N"/>
</dbReference>
<dbReference type="InterPro" id="IPR018149">
    <property type="entry name" value="Lys-tRNA-synth_II_C"/>
</dbReference>
<dbReference type="InterPro" id="IPR012340">
    <property type="entry name" value="NA-bd_OB-fold"/>
</dbReference>
<dbReference type="InterPro" id="IPR004365">
    <property type="entry name" value="NA-bd_OB_tRNA"/>
</dbReference>
<dbReference type="NCBIfam" id="TIGR00499">
    <property type="entry name" value="lysS_bact"/>
    <property type="match status" value="1"/>
</dbReference>
<dbReference type="NCBIfam" id="NF001756">
    <property type="entry name" value="PRK00484.1"/>
    <property type="match status" value="1"/>
</dbReference>
<dbReference type="PANTHER" id="PTHR42918:SF15">
    <property type="entry name" value="LYSINE--TRNA LIGASE, CHLOROPLASTIC_MITOCHONDRIAL"/>
    <property type="match status" value="1"/>
</dbReference>
<dbReference type="PANTHER" id="PTHR42918">
    <property type="entry name" value="LYSYL-TRNA SYNTHETASE"/>
    <property type="match status" value="1"/>
</dbReference>
<dbReference type="Pfam" id="PF00152">
    <property type="entry name" value="tRNA-synt_2"/>
    <property type="match status" value="1"/>
</dbReference>
<dbReference type="Pfam" id="PF01336">
    <property type="entry name" value="tRNA_anti-codon"/>
    <property type="match status" value="1"/>
</dbReference>
<dbReference type="PIRSF" id="PIRSF039101">
    <property type="entry name" value="LysRS2"/>
    <property type="match status" value="1"/>
</dbReference>
<dbReference type="PRINTS" id="PR00982">
    <property type="entry name" value="TRNASYNTHLYS"/>
</dbReference>
<dbReference type="SUPFAM" id="SSF55681">
    <property type="entry name" value="Class II aaRS and biotin synthetases"/>
    <property type="match status" value="1"/>
</dbReference>
<dbReference type="SUPFAM" id="SSF50249">
    <property type="entry name" value="Nucleic acid-binding proteins"/>
    <property type="match status" value="1"/>
</dbReference>
<dbReference type="PROSITE" id="PS50862">
    <property type="entry name" value="AA_TRNA_LIGASE_II"/>
    <property type="match status" value="1"/>
</dbReference>
<keyword id="KW-0030">Aminoacyl-tRNA synthetase</keyword>
<keyword id="KW-0067">ATP-binding</keyword>
<keyword id="KW-0963">Cytoplasm</keyword>
<keyword id="KW-0436">Ligase</keyword>
<keyword id="KW-0460">Magnesium</keyword>
<keyword id="KW-0479">Metal-binding</keyword>
<keyword id="KW-0547">Nucleotide-binding</keyword>
<keyword id="KW-0648">Protein biosynthesis</keyword>
<keyword id="KW-1185">Reference proteome</keyword>
<comment type="catalytic activity">
    <reaction>
        <text>tRNA(Lys) + L-lysine + ATP = L-lysyl-tRNA(Lys) + AMP + diphosphate</text>
        <dbReference type="Rhea" id="RHEA:20792"/>
        <dbReference type="Rhea" id="RHEA-COMP:9696"/>
        <dbReference type="Rhea" id="RHEA-COMP:9697"/>
        <dbReference type="ChEBI" id="CHEBI:30616"/>
        <dbReference type="ChEBI" id="CHEBI:32551"/>
        <dbReference type="ChEBI" id="CHEBI:33019"/>
        <dbReference type="ChEBI" id="CHEBI:78442"/>
        <dbReference type="ChEBI" id="CHEBI:78529"/>
        <dbReference type="ChEBI" id="CHEBI:456215"/>
        <dbReference type="EC" id="6.1.1.6"/>
    </reaction>
</comment>
<comment type="cofactor">
    <cofactor evidence="1">
        <name>Mg(2+)</name>
        <dbReference type="ChEBI" id="CHEBI:18420"/>
    </cofactor>
    <text evidence="1">Binds 3 Mg(2+) ions per subunit.</text>
</comment>
<comment type="subunit">
    <text evidence="1">Homodimer.</text>
</comment>
<comment type="subcellular location">
    <subcellularLocation>
        <location evidence="1">Cytoplasm</location>
    </subcellularLocation>
</comment>
<comment type="similarity">
    <text evidence="2">Belongs to the class-II aminoacyl-tRNA synthetase family.</text>
</comment>
<feature type="chain" id="PRO_0000152695" description="Lysine--tRNA ligase">
    <location>
        <begin position="1"/>
        <end position="510"/>
    </location>
</feature>
<feature type="binding site" evidence="1">
    <location>
        <position position="415"/>
    </location>
    <ligand>
        <name>Mg(2+)</name>
        <dbReference type="ChEBI" id="CHEBI:18420"/>
        <label>1</label>
    </ligand>
</feature>
<feature type="binding site" evidence="1">
    <location>
        <position position="422"/>
    </location>
    <ligand>
        <name>Mg(2+)</name>
        <dbReference type="ChEBI" id="CHEBI:18420"/>
        <label>1</label>
    </ligand>
</feature>
<feature type="binding site" evidence="1">
    <location>
        <position position="422"/>
    </location>
    <ligand>
        <name>Mg(2+)</name>
        <dbReference type="ChEBI" id="CHEBI:18420"/>
        <label>2</label>
    </ligand>
</feature>